<dbReference type="EC" id="5.3.1.1" evidence="1"/>
<dbReference type="EMBL" id="CP000698">
    <property type="protein sequence ID" value="ABQ26249.1"/>
    <property type="molecule type" value="Genomic_DNA"/>
</dbReference>
<dbReference type="RefSeq" id="WP_011938951.1">
    <property type="nucleotide sequence ID" value="NC_009483.1"/>
</dbReference>
<dbReference type="SMR" id="A5G381"/>
<dbReference type="STRING" id="351605.Gura_2059"/>
<dbReference type="KEGG" id="gur:Gura_2059"/>
<dbReference type="HOGENOM" id="CLU_024251_2_3_7"/>
<dbReference type="OrthoDB" id="9809429at2"/>
<dbReference type="UniPathway" id="UPA00109">
    <property type="reaction ID" value="UER00189"/>
</dbReference>
<dbReference type="UniPathway" id="UPA00138"/>
<dbReference type="Proteomes" id="UP000006695">
    <property type="component" value="Chromosome"/>
</dbReference>
<dbReference type="GO" id="GO:0005829">
    <property type="term" value="C:cytosol"/>
    <property type="evidence" value="ECO:0007669"/>
    <property type="project" value="TreeGrafter"/>
</dbReference>
<dbReference type="GO" id="GO:0004807">
    <property type="term" value="F:triose-phosphate isomerase activity"/>
    <property type="evidence" value="ECO:0007669"/>
    <property type="project" value="UniProtKB-UniRule"/>
</dbReference>
<dbReference type="GO" id="GO:0006094">
    <property type="term" value="P:gluconeogenesis"/>
    <property type="evidence" value="ECO:0007669"/>
    <property type="project" value="UniProtKB-UniRule"/>
</dbReference>
<dbReference type="GO" id="GO:0046166">
    <property type="term" value="P:glyceraldehyde-3-phosphate biosynthetic process"/>
    <property type="evidence" value="ECO:0007669"/>
    <property type="project" value="TreeGrafter"/>
</dbReference>
<dbReference type="GO" id="GO:0019563">
    <property type="term" value="P:glycerol catabolic process"/>
    <property type="evidence" value="ECO:0007669"/>
    <property type="project" value="TreeGrafter"/>
</dbReference>
<dbReference type="GO" id="GO:0006096">
    <property type="term" value="P:glycolytic process"/>
    <property type="evidence" value="ECO:0007669"/>
    <property type="project" value="UniProtKB-UniRule"/>
</dbReference>
<dbReference type="CDD" id="cd00311">
    <property type="entry name" value="TIM"/>
    <property type="match status" value="1"/>
</dbReference>
<dbReference type="FunFam" id="3.20.20.70:FF:000016">
    <property type="entry name" value="Triosephosphate isomerase"/>
    <property type="match status" value="1"/>
</dbReference>
<dbReference type="Gene3D" id="3.20.20.70">
    <property type="entry name" value="Aldolase class I"/>
    <property type="match status" value="1"/>
</dbReference>
<dbReference type="HAMAP" id="MF_00147_B">
    <property type="entry name" value="TIM_B"/>
    <property type="match status" value="1"/>
</dbReference>
<dbReference type="InterPro" id="IPR013785">
    <property type="entry name" value="Aldolase_TIM"/>
</dbReference>
<dbReference type="InterPro" id="IPR035990">
    <property type="entry name" value="TIM_sf"/>
</dbReference>
<dbReference type="InterPro" id="IPR022896">
    <property type="entry name" value="TrioseP_Isoase_bac/euk"/>
</dbReference>
<dbReference type="InterPro" id="IPR000652">
    <property type="entry name" value="Triosephosphate_isomerase"/>
</dbReference>
<dbReference type="InterPro" id="IPR020861">
    <property type="entry name" value="Triosephosphate_isomerase_AS"/>
</dbReference>
<dbReference type="NCBIfam" id="TIGR00419">
    <property type="entry name" value="tim"/>
    <property type="match status" value="1"/>
</dbReference>
<dbReference type="PANTHER" id="PTHR21139">
    <property type="entry name" value="TRIOSEPHOSPHATE ISOMERASE"/>
    <property type="match status" value="1"/>
</dbReference>
<dbReference type="PANTHER" id="PTHR21139:SF42">
    <property type="entry name" value="TRIOSEPHOSPHATE ISOMERASE"/>
    <property type="match status" value="1"/>
</dbReference>
<dbReference type="Pfam" id="PF00121">
    <property type="entry name" value="TIM"/>
    <property type="match status" value="1"/>
</dbReference>
<dbReference type="SUPFAM" id="SSF51351">
    <property type="entry name" value="Triosephosphate isomerase (TIM)"/>
    <property type="match status" value="1"/>
</dbReference>
<dbReference type="PROSITE" id="PS00171">
    <property type="entry name" value="TIM_1"/>
    <property type="match status" value="1"/>
</dbReference>
<dbReference type="PROSITE" id="PS51440">
    <property type="entry name" value="TIM_2"/>
    <property type="match status" value="1"/>
</dbReference>
<keyword id="KW-0963">Cytoplasm</keyword>
<keyword id="KW-0312">Gluconeogenesis</keyword>
<keyword id="KW-0324">Glycolysis</keyword>
<keyword id="KW-0413">Isomerase</keyword>
<keyword id="KW-1185">Reference proteome</keyword>
<protein>
    <recommendedName>
        <fullName evidence="1">Triosephosphate isomerase</fullName>
        <shortName evidence="1">TIM</shortName>
        <shortName evidence="1">TPI</shortName>
        <ecNumber evidence="1">5.3.1.1</ecNumber>
    </recommendedName>
    <alternativeName>
        <fullName evidence="1">Triose-phosphate isomerase</fullName>
    </alternativeName>
</protein>
<proteinExistence type="inferred from homology"/>
<organism>
    <name type="scientific">Geotalea uraniireducens (strain Rf4)</name>
    <name type="common">Geobacter uraniireducens</name>
    <dbReference type="NCBI Taxonomy" id="351605"/>
    <lineage>
        <taxon>Bacteria</taxon>
        <taxon>Pseudomonadati</taxon>
        <taxon>Thermodesulfobacteriota</taxon>
        <taxon>Desulfuromonadia</taxon>
        <taxon>Geobacterales</taxon>
        <taxon>Geobacteraceae</taxon>
        <taxon>Geotalea</taxon>
    </lineage>
</organism>
<sequence length="251" mass="27195">MRKPVIAGNWKLYKTTSEALELVNELIPLVKNASGVEIVVAPVFTVLSTVKNALKGTNINLAAQDCFWDEQGAYTGEVSSTMLLDAGCSHVIIGHSERRQFFGETDETVNKKNIAALRAGLTILFCIGETLHEREENQTFTVLERQISGGISGITKDELKNVIIAYEPVWAIGTGKTATDDQAQEAHKFIRGVVAKLCDSESAENIRILYGGSVKPENVKGLMAQKDIDGALVGGASLKADSFAHIVRFSE</sequence>
<gene>
    <name evidence="1" type="primary">tpiA</name>
    <name type="ordered locus">Gura_2059</name>
</gene>
<accession>A5G381</accession>
<name>TPIS_GEOUR</name>
<evidence type="ECO:0000255" key="1">
    <source>
        <dbReference type="HAMAP-Rule" id="MF_00147"/>
    </source>
</evidence>
<comment type="function">
    <text evidence="1">Involved in the gluconeogenesis. Catalyzes stereospecifically the conversion of dihydroxyacetone phosphate (DHAP) to D-glyceraldehyde-3-phosphate (G3P).</text>
</comment>
<comment type="catalytic activity">
    <reaction evidence="1">
        <text>D-glyceraldehyde 3-phosphate = dihydroxyacetone phosphate</text>
        <dbReference type="Rhea" id="RHEA:18585"/>
        <dbReference type="ChEBI" id="CHEBI:57642"/>
        <dbReference type="ChEBI" id="CHEBI:59776"/>
        <dbReference type="EC" id="5.3.1.1"/>
    </reaction>
</comment>
<comment type="pathway">
    <text evidence="1">Carbohydrate biosynthesis; gluconeogenesis.</text>
</comment>
<comment type="pathway">
    <text evidence="1">Carbohydrate degradation; glycolysis; D-glyceraldehyde 3-phosphate from glycerone phosphate: step 1/1.</text>
</comment>
<comment type="subunit">
    <text evidence="1">Homodimer.</text>
</comment>
<comment type="subcellular location">
    <subcellularLocation>
        <location evidence="1">Cytoplasm</location>
    </subcellularLocation>
</comment>
<comment type="similarity">
    <text evidence="1">Belongs to the triosephosphate isomerase family.</text>
</comment>
<feature type="chain" id="PRO_1000076648" description="Triosephosphate isomerase">
    <location>
        <begin position="1"/>
        <end position="251"/>
    </location>
</feature>
<feature type="active site" description="Electrophile" evidence="1">
    <location>
        <position position="95"/>
    </location>
</feature>
<feature type="active site" description="Proton acceptor" evidence="1">
    <location>
        <position position="167"/>
    </location>
</feature>
<feature type="binding site" evidence="1">
    <location>
        <begin position="9"/>
        <end position="11"/>
    </location>
    <ligand>
        <name>substrate</name>
    </ligand>
</feature>
<feature type="binding site" evidence="1">
    <location>
        <position position="173"/>
    </location>
    <ligand>
        <name>substrate</name>
    </ligand>
</feature>
<feature type="binding site" evidence="1">
    <location>
        <position position="213"/>
    </location>
    <ligand>
        <name>substrate</name>
    </ligand>
</feature>
<feature type="binding site" evidence="1">
    <location>
        <begin position="234"/>
        <end position="235"/>
    </location>
    <ligand>
        <name>substrate</name>
    </ligand>
</feature>
<reference key="1">
    <citation type="submission" date="2007-05" db="EMBL/GenBank/DDBJ databases">
        <title>Complete sequence of Geobacter uraniireducens Rf4.</title>
        <authorList>
            <consortium name="US DOE Joint Genome Institute"/>
            <person name="Copeland A."/>
            <person name="Lucas S."/>
            <person name="Lapidus A."/>
            <person name="Barry K."/>
            <person name="Detter J.C."/>
            <person name="Glavina del Rio T."/>
            <person name="Hammon N."/>
            <person name="Israni S."/>
            <person name="Dalin E."/>
            <person name="Tice H."/>
            <person name="Pitluck S."/>
            <person name="Chertkov O."/>
            <person name="Brettin T."/>
            <person name="Bruce D."/>
            <person name="Han C."/>
            <person name="Schmutz J."/>
            <person name="Larimer F."/>
            <person name="Land M."/>
            <person name="Hauser L."/>
            <person name="Kyrpides N."/>
            <person name="Mikhailova N."/>
            <person name="Shelobolina E."/>
            <person name="Aklujkar M."/>
            <person name="Lovley D."/>
            <person name="Richardson P."/>
        </authorList>
    </citation>
    <scope>NUCLEOTIDE SEQUENCE [LARGE SCALE GENOMIC DNA]</scope>
    <source>
        <strain>ATCC BAA-1134 / JCM 13001 / Rf4</strain>
    </source>
</reference>